<organism>
    <name type="scientific">Bos taurus</name>
    <name type="common">Bovine</name>
    <dbReference type="NCBI Taxonomy" id="9913"/>
    <lineage>
        <taxon>Eukaryota</taxon>
        <taxon>Metazoa</taxon>
        <taxon>Chordata</taxon>
        <taxon>Craniata</taxon>
        <taxon>Vertebrata</taxon>
        <taxon>Euteleostomi</taxon>
        <taxon>Mammalia</taxon>
        <taxon>Eutheria</taxon>
        <taxon>Laurasiatheria</taxon>
        <taxon>Artiodactyla</taxon>
        <taxon>Ruminantia</taxon>
        <taxon>Pecora</taxon>
        <taxon>Bovidae</taxon>
        <taxon>Bovinae</taxon>
        <taxon>Bos</taxon>
    </lineage>
</organism>
<feature type="chain" id="PRO_0000328581" description="N-acetylglucosaminyl-phosphatidylinositol de-N-acetylase">
    <location>
        <begin position="1"/>
        <end position="253"/>
    </location>
</feature>
<feature type="transmembrane region" description="Helical" evidence="3">
    <location>
        <begin position="3"/>
        <end position="23"/>
    </location>
</feature>
<feature type="topological domain" description="Cytoplasmic" evidence="1">
    <location>
        <begin position="24"/>
        <end position="253"/>
    </location>
</feature>
<reference key="1">
    <citation type="submission" date="2007-07" db="EMBL/GenBank/DDBJ databases">
        <authorList>
            <consortium name="NIH - Mammalian Gene Collection (MGC) project"/>
        </authorList>
    </citation>
    <scope>NUCLEOTIDE SEQUENCE [LARGE SCALE MRNA]</scope>
    <source>
        <strain>Hereford</strain>
        <tissue>Hypothalamus</tissue>
    </source>
</reference>
<accession>A6QQ24</accession>
<gene>
    <name type="primary">PIGL</name>
</gene>
<comment type="function">
    <text evidence="1">Catalyzes the second step of glycosylphosphatidylinositol (GPI) biosynthesis, which is the de-N-acetylation of N-acetylglucosaminyl-phosphatidylinositol.</text>
</comment>
<comment type="catalytic activity">
    <reaction evidence="1">
        <text>a 6-(N-acetyl-alpha-D-glucosaminyl)-1-(1,2-diacyl-sn-glycero-3-phospho)-1D-myo-inositol + H2O = a 6-(alpha-D-glucosaminyl)-1-(1,2-diacyl-sn-glycero-3-phospho)-1D-myo-inositol + acetate</text>
        <dbReference type="Rhea" id="RHEA:11660"/>
        <dbReference type="ChEBI" id="CHEBI:15377"/>
        <dbReference type="ChEBI" id="CHEBI:30089"/>
        <dbReference type="ChEBI" id="CHEBI:57265"/>
        <dbReference type="ChEBI" id="CHEBI:57997"/>
        <dbReference type="EC" id="3.5.1.89"/>
    </reaction>
    <physiologicalReaction direction="left-to-right" evidence="1">
        <dbReference type="Rhea" id="RHEA:11661"/>
    </physiologicalReaction>
</comment>
<comment type="pathway">
    <text evidence="1">Glycolipid biosynthesis; glycosylphosphatidylinositol-anchor biosynthesis.</text>
</comment>
<comment type="subcellular location">
    <subcellularLocation>
        <location evidence="1">Endoplasmic reticulum membrane</location>
        <topology evidence="1">Single-pass type I membrane protein</topology>
    </subcellularLocation>
</comment>
<comment type="domain">
    <text evidence="2">Retained in the ER by two retention signals, one located in cytoplasmic domain, and a second signal in transmembrane domain that is functional in the presence of membrane proximal residues of the cytoplasmic tail.</text>
</comment>
<comment type="similarity">
    <text evidence="4">Belongs to the PIGL family.</text>
</comment>
<proteinExistence type="evidence at transcript level"/>
<keyword id="KW-0256">Endoplasmic reticulum</keyword>
<keyword id="KW-0337">GPI-anchor biosynthesis</keyword>
<keyword id="KW-0378">Hydrolase</keyword>
<keyword id="KW-0443">Lipid metabolism</keyword>
<keyword id="KW-0472">Membrane</keyword>
<keyword id="KW-1185">Reference proteome</keyword>
<keyword id="KW-0812">Transmembrane</keyword>
<keyword id="KW-1133">Transmembrane helix</keyword>
<dbReference type="EC" id="3.5.1.89" evidence="1"/>
<dbReference type="EMBL" id="BC149604">
    <property type="protein sequence ID" value="AAI49605.1"/>
    <property type="molecule type" value="mRNA"/>
</dbReference>
<dbReference type="RefSeq" id="NP_001093781.1">
    <property type="nucleotide sequence ID" value="NM_001100311.2"/>
</dbReference>
<dbReference type="SMR" id="A6QQ24"/>
<dbReference type="FunCoup" id="A6QQ24">
    <property type="interactions" value="3909"/>
</dbReference>
<dbReference type="STRING" id="9913.ENSBTAP00000017653"/>
<dbReference type="PaxDb" id="9913-ENSBTAP00000017653"/>
<dbReference type="Ensembl" id="ENSBTAT00000017653.4">
    <property type="protein sequence ID" value="ENSBTAP00000017653.3"/>
    <property type="gene ID" value="ENSBTAG00000013273.5"/>
</dbReference>
<dbReference type="GeneID" id="507080"/>
<dbReference type="KEGG" id="bta:507080"/>
<dbReference type="CTD" id="9487"/>
<dbReference type="VEuPathDB" id="HostDB:ENSBTAG00000013273"/>
<dbReference type="VGNC" id="VGNC:32871">
    <property type="gene designation" value="PIGL"/>
</dbReference>
<dbReference type="eggNOG" id="KOG3332">
    <property type="taxonomic scope" value="Eukaryota"/>
</dbReference>
<dbReference type="GeneTree" id="ENSGT00390000018434"/>
<dbReference type="HOGENOM" id="CLU_034979_1_0_1"/>
<dbReference type="InParanoid" id="A6QQ24"/>
<dbReference type="OMA" id="YVLESVN"/>
<dbReference type="OrthoDB" id="440160at2759"/>
<dbReference type="TreeFam" id="TF315150"/>
<dbReference type="Reactome" id="R-BTA-162710">
    <property type="pathway name" value="Synthesis of glycosylphosphatidylinositol (GPI)"/>
</dbReference>
<dbReference type="UniPathway" id="UPA00196"/>
<dbReference type="Proteomes" id="UP000009136">
    <property type="component" value="Chromosome 19"/>
</dbReference>
<dbReference type="Bgee" id="ENSBTAG00000013273">
    <property type="expression patterns" value="Expressed in digestive system secreted substance and 109 other cell types or tissues"/>
</dbReference>
<dbReference type="GO" id="GO:0005783">
    <property type="term" value="C:endoplasmic reticulum"/>
    <property type="evidence" value="ECO:0000318"/>
    <property type="project" value="GO_Central"/>
</dbReference>
<dbReference type="GO" id="GO:0005789">
    <property type="term" value="C:endoplasmic reticulum membrane"/>
    <property type="evidence" value="ECO:0000250"/>
    <property type="project" value="UniProtKB"/>
</dbReference>
<dbReference type="GO" id="GO:0000225">
    <property type="term" value="F:N-acetylglucosaminylphosphatidylinositol deacetylase activity"/>
    <property type="evidence" value="ECO:0000250"/>
    <property type="project" value="UniProtKB"/>
</dbReference>
<dbReference type="GO" id="GO:0006506">
    <property type="term" value="P:GPI anchor biosynthetic process"/>
    <property type="evidence" value="ECO:0000250"/>
    <property type="project" value="UniProtKB"/>
</dbReference>
<dbReference type="FunFam" id="3.40.50.10320:FF:000002">
    <property type="entry name" value="Probable N-acetylglucosaminyl-phosphatidylinositol de-N-acetylase"/>
    <property type="match status" value="1"/>
</dbReference>
<dbReference type="Gene3D" id="3.40.50.10320">
    <property type="entry name" value="LmbE-like"/>
    <property type="match status" value="1"/>
</dbReference>
<dbReference type="InterPro" id="IPR003737">
    <property type="entry name" value="GlcNAc_PI_deacetylase-related"/>
</dbReference>
<dbReference type="InterPro" id="IPR024078">
    <property type="entry name" value="LmbE-like_dom_sf"/>
</dbReference>
<dbReference type="PANTHER" id="PTHR12993:SF11">
    <property type="entry name" value="N-ACETYLGLUCOSAMINYL-PHOSPHATIDYLINOSITOL DE-N-ACETYLASE"/>
    <property type="match status" value="1"/>
</dbReference>
<dbReference type="PANTHER" id="PTHR12993">
    <property type="entry name" value="N-ACETYLGLUCOSAMINYL-PHOSPHATIDYLINOSITOL DE-N-ACETYLASE-RELATED"/>
    <property type="match status" value="1"/>
</dbReference>
<dbReference type="Pfam" id="PF02585">
    <property type="entry name" value="PIG-L"/>
    <property type="match status" value="1"/>
</dbReference>
<dbReference type="SUPFAM" id="SSF102588">
    <property type="entry name" value="LmbE-like"/>
    <property type="match status" value="1"/>
</dbReference>
<protein>
    <recommendedName>
        <fullName>N-acetylglucosaminyl-phosphatidylinositol de-N-acetylase</fullName>
        <ecNumber evidence="1">3.5.1.89</ecNumber>
    </recommendedName>
    <alternativeName>
        <fullName>Phosphatidylinositol-glycan biosynthesis class L protein</fullName>
        <shortName>PIG-L</shortName>
    </alternativeName>
</protein>
<sequence length="253" mass="28330">MEVAAPLLCLAAAVLVWGVLWVWGSWERMTRPEQAGLPGGGSRTLLVTAHPDDEAMFFAPTILGLARLRHQLFLLCFSAGNYYNQGEIRKKELLQSCDVLGIPPSNVMIIENRDFPDDPDVRWDPDRAADVLLQHVEANGIKLVVTFDEGGVSGHSNHVALNAAVRTLQAEGKLPKGCSVLTLQSVNLLRKYLCLLDLPCSLLLARDALFVLTQREAAQAQRAMSCHRSQLLWFRRLYMLFSRYMRINSLNFL</sequence>
<evidence type="ECO:0000250" key="1">
    <source>
        <dbReference type="UniProtKB" id="O35790"/>
    </source>
</evidence>
<evidence type="ECO:0000250" key="2">
    <source>
        <dbReference type="UniProtKB" id="Q9Y2B2"/>
    </source>
</evidence>
<evidence type="ECO:0000255" key="3"/>
<evidence type="ECO:0000305" key="4"/>
<name>PIGL_BOVIN</name>